<gene>
    <name evidence="1" type="primary">rpoC1</name>
    <name type="ordered locus">P9515_16641</name>
</gene>
<organism>
    <name type="scientific">Prochlorococcus marinus (strain MIT 9515)</name>
    <dbReference type="NCBI Taxonomy" id="167542"/>
    <lineage>
        <taxon>Bacteria</taxon>
        <taxon>Bacillati</taxon>
        <taxon>Cyanobacteriota</taxon>
        <taxon>Cyanophyceae</taxon>
        <taxon>Synechococcales</taxon>
        <taxon>Prochlorococcaceae</taxon>
        <taxon>Prochlorococcus</taxon>
    </lineage>
</organism>
<comment type="function">
    <text evidence="1">DNA-dependent RNA polymerase catalyzes the transcription of DNA into RNA using the four ribonucleoside triphosphates as substrates.</text>
</comment>
<comment type="catalytic activity">
    <reaction evidence="1">
        <text>RNA(n) + a ribonucleoside 5'-triphosphate = RNA(n+1) + diphosphate</text>
        <dbReference type="Rhea" id="RHEA:21248"/>
        <dbReference type="Rhea" id="RHEA-COMP:14527"/>
        <dbReference type="Rhea" id="RHEA-COMP:17342"/>
        <dbReference type="ChEBI" id="CHEBI:33019"/>
        <dbReference type="ChEBI" id="CHEBI:61557"/>
        <dbReference type="ChEBI" id="CHEBI:140395"/>
        <dbReference type="EC" id="2.7.7.6"/>
    </reaction>
</comment>
<comment type="cofactor">
    <cofactor evidence="1">
        <name>Mg(2+)</name>
        <dbReference type="ChEBI" id="CHEBI:18420"/>
    </cofactor>
    <text evidence="1">Binds 1 Mg(2+) ion per subunit.</text>
</comment>
<comment type="cofactor">
    <cofactor evidence="1">
        <name>Zn(2+)</name>
        <dbReference type="ChEBI" id="CHEBI:29105"/>
    </cofactor>
    <text evidence="1">Binds 1 Zn(2+) ion per subunit.</text>
</comment>
<comment type="subunit">
    <text evidence="1">In cyanobacteria the RNAP catalytic core is composed of 2 alpha, 1 beta, 1 beta', 1 gamma and 1 omega subunit. When a sigma factor is associated with the core the holoenzyme is formed, which can initiate transcription.</text>
</comment>
<comment type="similarity">
    <text evidence="1">Belongs to the RNA polymerase beta' chain family. RpoC1 subfamily.</text>
</comment>
<proteinExistence type="inferred from homology"/>
<accession>A2BYL0</accession>
<feature type="chain" id="PRO_1000051992" description="DNA-directed RNA polymerase subunit gamma">
    <location>
        <begin position="1"/>
        <end position="634"/>
    </location>
</feature>
<feature type="binding site" evidence="1">
    <location>
        <position position="74"/>
    </location>
    <ligand>
        <name>Zn(2+)</name>
        <dbReference type="ChEBI" id="CHEBI:29105"/>
    </ligand>
</feature>
<feature type="binding site" evidence="1">
    <location>
        <position position="76"/>
    </location>
    <ligand>
        <name>Zn(2+)</name>
        <dbReference type="ChEBI" id="CHEBI:29105"/>
    </ligand>
</feature>
<feature type="binding site" evidence="1">
    <location>
        <position position="89"/>
    </location>
    <ligand>
        <name>Zn(2+)</name>
        <dbReference type="ChEBI" id="CHEBI:29105"/>
    </ligand>
</feature>
<feature type="binding site" evidence="1">
    <location>
        <position position="92"/>
    </location>
    <ligand>
        <name>Zn(2+)</name>
        <dbReference type="ChEBI" id="CHEBI:29105"/>
    </ligand>
</feature>
<feature type="binding site" evidence="1">
    <location>
        <position position="471"/>
    </location>
    <ligand>
        <name>Mg(2+)</name>
        <dbReference type="ChEBI" id="CHEBI:18420"/>
    </ligand>
</feature>
<feature type="binding site" evidence="1">
    <location>
        <position position="473"/>
    </location>
    <ligand>
        <name>Mg(2+)</name>
        <dbReference type="ChEBI" id="CHEBI:18420"/>
    </ligand>
</feature>
<feature type="binding site" evidence="1">
    <location>
        <position position="475"/>
    </location>
    <ligand>
        <name>Mg(2+)</name>
        <dbReference type="ChEBI" id="CHEBI:18420"/>
    </ligand>
</feature>
<evidence type="ECO:0000255" key="1">
    <source>
        <dbReference type="HAMAP-Rule" id="MF_01323"/>
    </source>
</evidence>
<reference key="1">
    <citation type="journal article" date="2007" name="PLoS Genet.">
        <title>Patterns and implications of gene gain and loss in the evolution of Prochlorococcus.</title>
        <authorList>
            <person name="Kettler G.C."/>
            <person name="Martiny A.C."/>
            <person name="Huang K."/>
            <person name="Zucker J."/>
            <person name="Coleman M.L."/>
            <person name="Rodrigue S."/>
            <person name="Chen F."/>
            <person name="Lapidus A."/>
            <person name="Ferriera S."/>
            <person name="Johnson J."/>
            <person name="Steglich C."/>
            <person name="Church G.M."/>
            <person name="Richardson P."/>
            <person name="Chisholm S.W."/>
        </authorList>
    </citation>
    <scope>NUCLEOTIDE SEQUENCE [LARGE SCALE GENOMIC DNA]</scope>
    <source>
        <strain>MIT 9515</strain>
    </source>
</reference>
<name>RPOC1_PROM5</name>
<keyword id="KW-0240">DNA-directed RNA polymerase</keyword>
<keyword id="KW-0460">Magnesium</keyword>
<keyword id="KW-0479">Metal-binding</keyword>
<keyword id="KW-0548">Nucleotidyltransferase</keyword>
<keyword id="KW-0804">Transcription</keyword>
<keyword id="KW-0808">Transferase</keyword>
<keyword id="KW-0862">Zinc</keyword>
<protein>
    <recommendedName>
        <fullName evidence="1">DNA-directed RNA polymerase subunit gamma</fullName>
        <shortName evidence="1">RNAP subunit gamma</shortName>
        <ecNumber evidence="1">2.7.7.6</ecNumber>
    </recommendedName>
    <alternativeName>
        <fullName evidence="1">RNA polymerase subunit gamma</fullName>
    </alternativeName>
    <alternativeName>
        <fullName evidence="1">Transcriptase subunit gamma</fullName>
    </alternativeName>
</protein>
<dbReference type="EC" id="2.7.7.6" evidence="1"/>
<dbReference type="EMBL" id="CP000552">
    <property type="protein sequence ID" value="ABM72871.1"/>
    <property type="molecule type" value="Genomic_DNA"/>
</dbReference>
<dbReference type="RefSeq" id="WP_011820964.1">
    <property type="nucleotide sequence ID" value="NC_008817.1"/>
</dbReference>
<dbReference type="SMR" id="A2BYL0"/>
<dbReference type="STRING" id="167542.P9515_16641"/>
<dbReference type="GeneID" id="60201091"/>
<dbReference type="KEGG" id="pmc:P9515_16641"/>
<dbReference type="eggNOG" id="COG0086">
    <property type="taxonomic scope" value="Bacteria"/>
</dbReference>
<dbReference type="HOGENOM" id="CLU_030022_2_0_3"/>
<dbReference type="OrthoDB" id="9815296at2"/>
<dbReference type="Proteomes" id="UP000001589">
    <property type="component" value="Chromosome"/>
</dbReference>
<dbReference type="GO" id="GO:0000428">
    <property type="term" value="C:DNA-directed RNA polymerase complex"/>
    <property type="evidence" value="ECO:0007669"/>
    <property type="project" value="UniProtKB-KW"/>
</dbReference>
<dbReference type="GO" id="GO:0003677">
    <property type="term" value="F:DNA binding"/>
    <property type="evidence" value="ECO:0007669"/>
    <property type="project" value="UniProtKB-UniRule"/>
</dbReference>
<dbReference type="GO" id="GO:0003899">
    <property type="term" value="F:DNA-directed RNA polymerase activity"/>
    <property type="evidence" value="ECO:0007669"/>
    <property type="project" value="UniProtKB-UniRule"/>
</dbReference>
<dbReference type="GO" id="GO:0000287">
    <property type="term" value="F:magnesium ion binding"/>
    <property type="evidence" value="ECO:0007669"/>
    <property type="project" value="UniProtKB-UniRule"/>
</dbReference>
<dbReference type="GO" id="GO:0008270">
    <property type="term" value="F:zinc ion binding"/>
    <property type="evidence" value="ECO:0007669"/>
    <property type="project" value="UniProtKB-UniRule"/>
</dbReference>
<dbReference type="GO" id="GO:0006351">
    <property type="term" value="P:DNA-templated transcription"/>
    <property type="evidence" value="ECO:0007669"/>
    <property type="project" value="UniProtKB-UniRule"/>
</dbReference>
<dbReference type="Gene3D" id="1.10.40.90">
    <property type="match status" value="1"/>
</dbReference>
<dbReference type="Gene3D" id="2.40.40.20">
    <property type="match status" value="1"/>
</dbReference>
<dbReference type="Gene3D" id="4.10.860.120">
    <property type="entry name" value="RNA polymerase II, clamp domain"/>
    <property type="match status" value="1"/>
</dbReference>
<dbReference type="Gene3D" id="1.10.274.100">
    <property type="entry name" value="RNA polymerase Rpb1, domain 3"/>
    <property type="match status" value="1"/>
</dbReference>
<dbReference type="HAMAP" id="MF_01323">
    <property type="entry name" value="RNApol_bact_RpoC1"/>
    <property type="match status" value="1"/>
</dbReference>
<dbReference type="InterPro" id="IPR012755">
    <property type="entry name" value="DNA-dir_RpoC1_gamma"/>
</dbReference>
<dbReference type="InterPro" id="IPR045867">
    <property type="entry name" value="DNA-dir_RpoC_beta_prime"/>
</dbReference>
<dbReference type="InterPro" id="IPR000722">
    <property type="entry name" value="RNA_pol_asu"/>
</dbReference>
<dbReference type="InterPro" id="IPR006592">
    <property type="entry name" value="RNA_pol_N"/>
</dbReference>
<dbReference type="InterPro" id="IPR007080">
    <property type="entry name" value="RNA_pol_Rpb1_1"/>
</dbReference>
<dbReference type="InterPro" id="IPR007066">
    <property type="entry name" value="RNA_pol_Rpb1_3"/>
</dbReference>
<dbReference type="InterPro" id="IPR042102">
    <property type="entry name" value="RNA_pol_Rpb1_3_sf"/>
</dbReference>
<dbReference type="InterPro" id="IPR044893">
    <property type="entry name" value="RNA_pol_Rpb1_clamp_domain"/>
</dbReference>
<dbReference type="InterPro" id="IPR034678">
    <property type="entry name" value="RNApol_RpoC1"/>
</dbReference>
<dbReference type="NCBIfam" id="NF002729">
    <property type="entry name" value="PRK02625.1"/>
    <property type="match status" value="1"/>
</dbReference>
<dbReference type="NCBIfam" id="TIGR02387">
    <property type="entry name" value="rpoC1_cyan"/>
    <property type="match status" value="1"/>
</dbReference>
<dbReference type="PANTHER" id="PTHR19376">
    <property type="entry name" value="DNA-DIRECTED RNA POLYMERASE"/>
    <property type="match status" value="1"/>
</dbReference>
<dbReference type="PANTHER" id="PTHR19376:SF54">
    <property type="entry name" value="DNA-DIRECTED RNA POLYMERASE SUBUNIT BETA"/>
    <property type="match status" value="1"/>
</dbReference>
<dbReference type="Pfam" id="PF04997">
    <property type="entry name" value="RNA_pol_Rpb1_1"/>
    <property type="match status" value="1"/>
</dbReference>
<dbReference type="Pfam" id="PF00623">
    <property type="entry name" value="RNA_pol_Rpb1_2"/>
    <property type="match status" value="1"/>
</dbReference>
<dbReference type="Pfam" id="PF04983">
    <property type="entry name" value="RNA_pol_Rpb1_3"/>
    <property type="match status" value="1"/>
</dbReference>
<dbReference type="SMART" id="SM00663">
    <property type="entry name" value="RPOLA_N"/>
    <property type="match status" value="1"/>
</dbReference>
<dbReference type="SUPFAM" id="SSF64484">
    <property type="entry name" value="beta and beta-prime subunits of DNA dependent RNA-polymerase"/>
    <property type="match status" value="1"/>
</dbReference>
<sequence>MTNSNLRTENHFDYVKISIASPQRIMDWGQRTLPNGQVVGEVTKPETINYRTLKPEMDGLFCEKIFGPSKDWECHCGKYKRVRHRGIVCERCGVEVTESRVRRHRMGYIKLAAPVSHVWYLKGIPSYVAILLDIPLRDVEQIVYFNCYVVLDVGDHKDLKYKQLLTEDEWLEIEDEIYAEDSTIENEPFVGIGAEALKQLLEDLDLNQIAEELREEITNSKGQKRAKLIKRIRVIDNFIATNAKPEWMVLDAIPVIPPDLRPMVQLDGGRFATSDLNDLYRRVINRNNRLARLQEILAPEIIVRNEKRMLQEAVDALIDNGRRGRTVVGANNRALKSLSDIIEGKQGRFRQNLLGKRVDYSGRSVIVVGPKLKMHQCGLPKEMAIELFQPFVIHRLIRQNIVNNIKAAKKLIQKADDEVMQVLQEVIEGHPILLNRAPTLHRLGIQAFEPKLVGGRAIQLHPLVCPAFNADFDGDQMAVHVPLALEAQTEARMLMLASNNILSPATGEPIVTPSQDMVLGSYYLTALQPNFKKPNFGDNQRTYASLEDVIFAFEDKRVGLHEWVWLRFNGEVDDDEESKTPQETKELEDGSKLEIWNFRRDRFDSQNNLISRFILTTVGRVVMNHTIIDSVSKT</sequence>